<protein>
    <recommendedName>
        <fullName evidence="1">Nuclear distribution protein PAC1-1</fullName>
    </recommendedName>
    <alternativeName>
        <fullName evidence="1">Lissencephaly-1 homolog 1</fullName>
        <shortName evidence="1">LIS-1 1</shortName>
    </alternativeName>
    <alternativeName>
        <fullName evidence="1">nudF homolog 1</fullName>
    </alternativeName>
</protein>
<proteinExistence type="inferred from homology"/>
<sequence>MAQLLTSRQAEELHRALIAYLSSNNLTSTAAALRAEIGLGEDVFDATTAKKYEGLLEKKWTSVVRLQKKVRHTSQLSNATPTSRQNKDPVNWLPKSPARHTLQSHRQPITCVAFHPVFSSLASGSEDQTIKIWDWELGELERTIKGHTKTVLDVDFGGPRGNTLLASCSSDLTIKLWDPSDDYKNIRTLPGHDHSVSAVRFIPSGVAGGAGNLLVSASRDKTLRIWDVSTGYCVKTLRGHAEWVRDVCPSVDGRFILSTSDDYTSRLWDVSIANPEPKTTLIGHEHVVLCCAIAPSASYPHLAAIAGVKKPPTTSAVEFMATGSRDKTIRLWDARGTCIKILVGHDNWVRGLVFHPGGKYLLSASDDYTLRCWDLTQEGRCVKTISDAHAHFVQCIRWAPSVVKDVSVANGGDGQGGEANGTPRQAAGAGAAEAQIRCVLATGSVDLNVRIFAN</sequence>
<feature type="chain" id="PRO_0000405076" description="Nuclear distribution protein PAC1-1">
    <location>
        <begin position="1"/>
        <end position="454"/>
    </location>
</feature>
<feature type="domain" description="LisH" evidence="1">
    <location>
        <begin position="9"/>
        <end position="41"/>
    </location>
</feature>
<feature type="repeat" description="WD 1">
    <location>
        <begin position="104"/>
        <end position="145"/>
    </location>
</feature>
<feature type="repeat" description="WD 2">
    <location>
        <begin position="147"/>
        <end position="187"/>
    </location>
</feature>
<feature type="repeat" description="WD 3">
    <location>
        <begin position="191"/>
        <end position="236"/>
    </location>
</feature>
<feature type="repeat" description="WD 4">
    <location>
        <begin position="239"/>
        <end position="278"/>
    </location>
</feature>
<feature type="repeat" description="WD 5">
    <location>
        <begin position="283"/>
        <end position="342"/>
    </location>
</feature>
<feature type="repeat" description="WD 6">
    <location>
        <begin position="344"/>
        <end position="383"/>
    </location>
</feature>
<feature type="repeat" description="WD 7">
    <location>
        <begin position="388"/>
        <end position="450"/>
    </location>
</feature>
<feature type="region of interest" description="Disordered" evidence="2">
    <location>
        <begin position="71"/>
        <end position="93"/>
    </location>
</feature>
<feature type="compositionally biased region" description="Polar residues" evidence="2">
    <location>
        <begin position="73"/>
        <end position="84"/>
    </location>
</feature>
<organism>
    <name type="scientific">Chaetomium globosum (strain ATCC 6205 / CBS 148.51 / DSM 1962 / NBRC 6347 / NRRL 1970)</name>
    <name type="common">Soil fungus</name>
    <dbReference type="NCBI Taxonomy" id="306901"/>
    <lineage>
        <taxon>Eukaryota</taxon>
        <taxon>Fungi</taxon>
        <taxon>Dikarya</taxon>
        <taxon>Ascomycota</taxon>
        <taxon>Pezizomycotina</taxon>
        <taxon>Sordariomycetes</taxon>
        <taxon>Sordariomycetidae</taxon>
        <taxon>Sordariales</taxon>
        <taxon>Chaetomiaceae</taxon>
        <taxon>Chaetomium</taxon>
    </lineage>
</organism>
<dbReference type="EMBL" id="CH408030">
    <property type="protein sequence ID" value="EAQ90343.1"/>
    <property type="molecule type" value="Genomic_DNA"/>
</dbReference>
<dbReference type="RefSeq" id="XP_001228794.1">
    <property type="nucleotide sequence ID" value="XM_001228793.1"/>
</dbReference>
<dbReference type="SMR" id="Q2HBX6"/>
<dbReference type="FunCoup" id="Q2HBX6">
    <property type="interactions" value="43"/>
</dbReference>
<dbReference type="STRING" id="306901.Q2HBX6"/>
<dbReference type="GeneID" id="4388592"/>
<dbReference type="VEuPathDB" id="FungiDB:CHGG_02278"/>
<dbReference type="eggNOG" id="KOG0295">
    <property type="taxonomic scope" value="Eukaryota"/>
</dbReference>
<dbReference type="HOGENOM" id="CLU_000288_57_15_1"/>
<dbReference type="InParanoid" id="Q2HBX6"/>
<dbReference type="OMA" id="WHVATKE"/>
<dbReference type="OrthoDB" id="10264588at2759"/>
<dbReference type="Proteomes" id="UP000001056">
    <property type="component" value="Unassembled WGS sequence"/>
</dbReference>
<dbReference type="GO" id="GO:0005737">
    <property type="term" value="C:cytoplasm"/>
    <property type="evidence" value="ECO:0007669"/>
    <property type="project" value="UniProtKB-UniRule"/>
</dbReference>
<dbReference type="GO" id="GO:0005874">
    <property type="term" value="C:microtubule"/>
    <property type="evidence" value="ECO:0007669"/>
    <property type="project" value="UniProtKB-KW"/>
</dbReference>
<dbReference type="GO" id="GO:0005875">
    <property type="term" value="C:microtubule associated complex"/>
    <property type="evidence" value="ECO:0007669"/>
    <property type="project" value="UniProtKB-UniRule"/>
</dbReference>
<dbReference type="GO" id="GO:0000922">
    <property type="term" value="C:spindle pole"/>
    <property type="evidence" value="ECO:0007669"/>
    <property type="project" value="UniProtKB-SubCell"/>
</dbReference>
<dbReference type="GO" id="GO:0070840">
    <property type="term" value="F:dynein complex binding"/>
    <property type="evidence" value="ECO:0007669"/>
    <property type="project" value="UniProtKB-UniRule"/>
</dbReference>
<dbReference type="GO" id="GO:0051301">
    <property type="term" value="P:cell division"/>
    <property type="evidence" value="ECO:0007669"/>
    <property type="project" value="UniProtKB-KW"/>
</dbReference>
<dbReference type="GO" id="GO:0000132">
    <property type="term" value="P:establishment of mitotic spindle orientation"/>
    <property type="evidence" value="ECO:0007669"/>
    <property type="project" value="UniProtKB-UniRule"/>
</dbReference>
<dbReference type="GO" id="GO:0051012">
    <property type="term" value="P:microtubule sliding"/>
    <property type="evidence" value="ECO:0007669"/>
    <property type="project" value="UniProtKB-UniRule"/>
</dbReference>
<dbReference type="CDD" id="cd00200">
    <property type="entry name" value="WD40"/>
    <property type="match status" value="1"/>
</dbReference>
<dbReference type="FunFam" id="2.130.10.10:FF:000342">
    <property type="entry name" value="Nuclear distribution protein PAC1"/>
    <property type="match status" value="1"/>
</dbReference>
<dbReference type="Gene3D" id="1.20.960.30">
    <property type="match status" value="1"/>
</dbReference>
<dbReference type="Gene3D" id="2.130.10.10">
    <property type="entry name" value="YVTN repeat-like/Quinoprotein amine dehydrogenase"/>
    <property type="match status" value="1"/>
</dbReference>
<dbReference type="HAMAP" id="MF_03141">
    <property type="entry name" value="lis1"/>
    <property type="match status" value="1"/>
</dbReference>
<dbReference type="InterPro" id="IPR017252">
    <property type="entry name" value="Dynein_regulator_LIS1"/>
</dbReference>
<dbReference type="InterPro" id="IPR020472">
    <property type="entry name" value="G-protein_beta_WD-40_rep"/>
</dbReference>
<dbReference type="InterPro" id="IPR037190">
    <property type="entry name" value="LIS1_N"/>
</dbReference>
<dbReference type="InterPro" id="IPR006594">
    <property type="entry name" value="LisH"/>
</dbReference>
<dbReference type="InterPro" id="IPR056795">
    <property type="entry name" value="PAC1-like_LisH-like_dom"/>
</dbReference>
<dbReference type="InterPro" id="IPR015943">
    <property type="entry name" value="WD40/YVTN_repeat-like_dom_sf"/>
</dbReference>
<dbReference type="InterPro" id="IPR019775">
    <property type="entry name" value="WD40_repeat_CS"/>
</dbReference>
<dbReference type="InterPro" id="IPR036322">
    <property type="entry name" value="WD40_repeat_dom_sf"/>
</dbReference>
<dbReference type="InterPro" id="IPR001680">
    <property type="entry name" value="WD40_rpt"/>
</dbReference>
<dbReference type="PANTHER" id="PTHR19879">
    <property type="entry name" value="TRANSCRIPTION INITIATION FACTOR TFIID"/>
    <property type="match status" value="1"/>
</dbReference>
<dbReference type="PANTHER" id="PTHR19879:SF9">
    <property type="entry name" value="TRANSCRIPTION INITIATION FACTOR TFIID SUBUNIT 5"/>
    <property type="match status" value="1"/>
</dbReference>
<dbReference type="Pfam" id="PF24951">
    <property type="entry name" value="LisH_PAC1"/>
    <property type="match status" value="1"/>
</dbReference>
<dbReference type="Pfam" id="PF00400">
    <property type="entry name" value="WD40"/>
    <property type="match status" value="6"/>
</dbReference>
<dbReference type="PIRSF" id="PIRSF037647">
    <property type="entry name" value="Dynein_regulator_Lis1"/>
    <property type="match status" value="1"/>
</dbReference>
<dbReference type="PRINTS" id="PR00320">
    <property type="entry name" value="GPROTEINBRPT"/>
</dbReference>
<dbReference type="SMART" id="SM00320">
    <property type="entry name" value="WD40"/>
    <property type="match status" value="7"/>
</dbReference>
<dbReference type="SUPFAM" id="SSF109925">
    <property type="entry name" value="Lissencephaly-1 protein (Lis-1, PAF-AH alpha) N-terminal domain"/>
    <property type="match status" value="1"/>
</dbReference>
<dbReference type="SUPFAM" id="SSF50978">
    <property type="entry name" value="WD40 repeat-like"/>
    <property type="match status" value="1"/>
</dbReference>
<dbReference type="PROSITE" id="PS50896">
    <property type="entry name" value="LISH"/>
    <property type="match status" value="1"/>
</dbReference>
<dbReference type="PROSITE" id="PS00678">
    <property type="entry name" value="WD_REPEATS_1"/>
    <property type="match status" value="3"/>
</dbReference>
<dbReference type="PROSITE" id="PS50082">
    <property type="entry name" value="WD_REPEATS_2"/>
    <property type="match status" value="6"/>
</dbReference>
<dbReference type="PROSITE" id="PS50294">
    <property type="entry name" value="WD_REPEATS_REGION"/>
    <property type="match status" value="1"/>
</dbReference>
<comment type="function">
    <text evidence="1">Positively regulates the activity of the minus-end directed microtubule motor protein dynein. May enhance dynein-mediated microtubule sliding by targeting dynein to the microtubule plus end. Required for nuclear migration during vegetative growth as well as development. Required for retrograde early endosome (EE) transport from the hyphal tip. Required for localization of dynein to the mitotic spindle poles. Recruits additional proteins to the dynein complex at SPBs.</text>
</comment>
<comment type="subunit">
    <text evidence="1">Self-associates. Interacts with NDL1 and dynein.</text>
</comment>
<comment type="subcellular location">
    <subcellularLocation>
        <location evidence="1">Cytoplasm</location>
        <location evidence="1">Cytoskeleton</location>
    </subcellularLocation>
    <subcellularLocation>
        <location evidence="1">Cytoplasm</location>
        <location evidence="1">Cytoskeleton</location>
        <location evidence="1">Spindle pole</location>
    </subcellularLocation>
    <text evidence="1">Localizes to the plus ends of microtubules at the hyphal tip and the mitotic spindle poles.</text>
</comment>
<comment type="domain">
    <text evidence="1">Dimerization mediated by the LisH domain may be required to activate dynein.</text>
</comment>
<comment type="similarity">
    <text evidence="1">Belongs to the WD repeat LIS1/nudF family.</text>
</comment>
<keyword id="KW-0131">Cell cycle</keyword>
<keyword id="KW-0132">Cell division</keyword>
<keyword id="KW-0175">Coiled coil</keyword>
<keyword id="KW-0963">Cytoplasm</keyword>
<keyword id="KW-0206">Cytoskeleton</keyword>
<keyword id="KW-0493">Microtubule</keyword>
<keyword id="KW-0498">Mitosis</keyword>
<keyword id="KW-1185">Reference proteome</keyword>
<keyword id="KW-0677">Repeat</keyword>
<keyword id="KW-0813">Transport</keyword>
<keyword id="KW-0853">WD repeat</keyword>
<name>LIS11_CHAGB</name>
<accession>Q2HBX6</accession>
<evidence type="ECO:0000255" key="1">
    <source>
        <dbReference type="HAMAP-Rule" id="MF_03141"/>
    </source>
</evidence>
<evidence type="ECO:0000256" key="2">
    <source>
        <dbReference type="SAM" id="MobiDB-lite"/>
    </source>
</evidence>
<gene>
    <name evidence="1" type="primary">PAC1-1</name>
    <name evidence="1" type="synonym">LIS1-1</name>
    <name type="ORF">CHGG_02278</name>
</gene>
<reference key="1">
    <citation type="journal article" date="2015" name="Genome Announc.">
        <title>Draft genome sequence of the cellulolytic fungus Chaetomium globosum.</title>
        <authorList>
            <person name="Cuomo C.A."/>
            <person name="Untereiner W.A."/>
            <person name="Ma L.-J."/>
            <person name="Grabherr M."/>
            <person name="Birren B.W."/>
        </authorList>
    </citation>
    <scope>NUCLEOTIDE SEQUENCE [LARGE SCALE GENOMIC DNA]</scope>
    <source>
        <strain>ATCC 6205 / CBS 148.51 / DSM 1962 / NBRC 6347 / NRRL 1970</strain>
    </source>
</reference>